<protein>
    <recommendedName>
        <fullName evidence="1">Deoxyuridine 5'-triphosphate nucleotidohydrolase</fullName>
        <shortName evidence="1">dUTPase</shortName>
        <ecNumber evidence="1">3.6.1.23</ecNumber>
    </recommendedName>
    <alternativeName>
        <fullName evidence="1">dUTP pyrophosphatase</fullName>
    </alternativeName>
</protein>
<gene>
    <name evidence="1" type="primary">dut</name>
    <name type="ordered locus">SNSL254_A4011</name>
</gene>
<dbReference type="EC" id="3.6.1.23" evidence="1"/>
<dbReference type="EMBL" id="CP001113">
    <property type="protein sequence ID" value="ACF63106.1"/>
    <property type="molecule type" value="Genomic_DNA"/>
</dbReference>
<dbReference type="RefSeq" id="WP_000976078.1">
    <property type="nucleotide sequence ID" value="NZ_CCMR01000004.1"/>
</dbReference>
<dbReference type="SMR" id="B4SXE1"/>
<dbReference type="KEGG" id="see:SNSL254_A4011"/>
<dbReference type="HOGENOM" id="CLU_068508_1_1_6"/>
<dbReference type="UniPathway" id="UPA00610">
    <property type="reaction ID" value="UER00666"/>
</dbReference>
<dbReference type="Proteomes" id="UP000008824">
    <property type="component" value="Chromosome"/>
</dbReference>
<dbReference type="GO" id="GO:0004170">
    <property type="term" value="F:dUTP diphosphatase activity"/>
    <property type="evidence" value="ECO:0007669"/>
    <property type="project" value="UniProtKB-UniRule"/>
</dbReference>
<dbReference type="GO" id="GO:0000287">
    <property type="term" value="F:magnesium ion binding"/>
    <property type="evidence" value="ECO:0007669"/>
    <property type="project" value="UniProtKB-UniRule"/>
</dbReference>
<dbReference type="GO" id="GO:0006226">
    <property type="term" value="P:dUMP biosynthetic process"/>
    <property type="evidence" value="ECO:0007669"/>
    <property type="project" value="UniProtKB-UniRule"/>
</dbReference>
<dbReference type="GO" id="GO:0046081">
    <property type="term" value="P:dUTP catabolic process"/>
    <property type="evidence" value="ECO:0007669"/>
    <property type="project" value="InterPro"/>
</dbReference>
<dbReference type="CDD" id="cd07557">
    <property type="entry name" value="trimeric_dUTPase"/>
    <property type="match status" value="1"/>
</dbReference>
<dbReference type="FunFam" id="2.70.40.10:FF:000002">
    <property type="entry name" value="dUTP diphosphatase"/>
    <property type="match status" value="1"/>
</dbReference>
<dbReference type="Gene3D" id="2.70.40.10">
    <property type="match status" value="1"/>
</dbReference>
<dbReference type="HAMAP" id="MF_00116">
    <property type="entry name" value="dUTPase_bact"/>
    <property type="match status" value="1"/>
</dbReference>
<dbReference type="InterPro" id="IPR008181">
    <property type="entry name" value="dUTPase"/>
</dbReference>
<dbReference type="InterPro" id="IPR029054">
    <property type="entry name" value="dUTPase-like"/>
</dbReference>
<dbReference type="InterPro" id="IPR036157">
    <property type="entry name" value="dUTPase-like_sf"/>
</dbReference>
<dbReference type="InterPro" id="IPR033704">
    <property type="entry name" value="dUTPase_trimeric"/>
</dbReference>
<dbReference type="NCBIfam" id="TIGR00576">
    <property type="entry name" value="dut"/>
    <property type="match status" value="1"/>
</dbReference>
<dbReference type="NCBIfam" id="NF001862">
    <property type="entry name" value="PRK00601.1"/>
    <property type="match status" value="1"/>
</dbReference>
<dbReference type="PANTHER" id="PTHR11241">
    <property type="entry name" value="DEOXYURIDINE 5'-TRIPHOSPHATE NUCLEOTIDOHYDROLASE"/>
    <property type="match status" value="1"/>
</dbReference>
<dbReference type="PANTHER" id="PTHR11241:SF0">
    <property type="entry name" value="DEOXYURIDINE 5'-TRIPHOSPHATE NUCLEOTIDOHYDROLASE"/>
    <property type="match status" value="1"/>
</dbReference>
<dbReference type="Pfam" id="PF00692">
    <property type="entry name" value="dUTPase"/>
    <property type="match status" value="1"/>
</dbReference>
<dbReference type="SUPFAM" id="SSF51283">
    <property type="entry name" value="dUTPase-like"/>
    <property type="match status" value="1"/>
</dbReference>
<sequence length="152" mass="16168">MMKKIDVKILDPRVGQQFPLPTYATSGSAGLDLRACLDDAVELAPGATTLVPTGLAIHIADPSLAAVMLPRSGLGHKHGIVLGNLVGLIDSDYQGQLMVSIWNRGQDSFTIEPGERIAQMVFVPVVQAEFNLVEAFDATERGEGGFGHSGRK</sequence>
<comment type="function">
    <text evidence="1">This enzyme is involved in nucleotide metabolism: it produces dUMP, the immediate precursor of thymidine nucleotides and it decreases the intracellular concentration of dUTP so that uracil cannot be incorporated into DNA.</text>
</comment>
<comment type="catalytic activity">
    <reaction evidence="1">
        <text>dUTP + H2O = dUMP + diphosphate + H(+)</text>
        <dbReference type="Rhea" id="RHEA:10248"/>
        <dbReference type="ChEBI" id="CHEBI:15377"/>
        <dbReference type="ChEBI" id="CHEBI:15378"/>
        <dbReference type="ChEBI" id="CHEBI:33019"/>
        <dbReference type="ChEBI" id="CHEBI:61555"/>
        <dbReference type="ChEBI" id="CHEBI:246422"/>
        <dbReference type="EC" id="3.6.1.23"/>
    </reaction>
</comment>
<comment type="cofactor">
    <cofactor evidence="1">
        <name>Mg(2+)</name>
        <dbReference type="ChEBI" id="CHEBI:18420"/>
    </cofactor>
</comment>
<comment type="pathway">
    <text evidence="1">Pyrimidine metabolism; dUMP biosynthesis; dUMP from dCTP (dUTP route): step 2/2.</text>
</comment>
<comment type="similarity">
    <text evidence="1">Belongs to the dUTPase family.</text>
</comment>
<accession>B4SXE1</accession>
<name>DUT_SALNS</name>
<organism>
    <name type="scientific">Salmonella newport (strain SL254)</name>
    <dbReference type="NCBI Taxonomy" id="423368"/>
    <lineage>
        <taxon>Bacteria</taxon>
        <taxon>Pseudomonadati</taxon>
        <taxon>Pseudomonadota</taxon>
        <taxon>Gammaproteobacteria</taxon>
        <taxon>Enterobacterales</taxon>
        <taxon>Enterobacteriaceae</taxon>
        <taxon>Salmonella</taxon>
    </lineage>
</organism>
<evidence type="ECO:0000255" key="1">
    <source>
        <dbReference type="HAMAP-Rule" id="MF_00116"/>
    </source>
</evidence>
<reference key="1">
    <citation type="journal article" date="2011" name="J. Bacteriol.">
        <title>Comparative genomics of 28 Salmonella enterica isolates: evidence for CRISPR-mediated adaptive sublineage evolution.</title>
        <authorList>
            <person name="Fricke W.F."/>
            <person name="Mammel M.K."/>
            <person name="McDermott P.F."/>
            <person name="Tartera C."/>
            <person name="White D.G."/>
            <person name="Leclerc J.E."/>
            <person name="Ravel J."/>
            <person name="Cebula T.A."/>
        </authorList>
    </citation>
    <scope>NUCLEOTIDE SEQUENCE [LARGE SCALE GENOMIC DNA]</scope>
    <source>
        <strain>SL254</strain>
    </source>
</reference>
<feature type="chain" id="PRO_1000094991" description="Deoxyuridine 5'-triphosphate nucleotidohydrolase">
    <location>
        <begin position="1"/>
        <end position="152"/>
    </location>
</feature>
<feature type="binding site" evidence="1">
    <location>
        <begin position="71"/>
        <end position="73"/>
    </location>
    <ligand>
        <name>substrate</name>
    </ligand>
</feature>
<feature type="binding site" evidence="1">
    <location>
        <position position="84"/>
    </location>
    <ligand>
        <name>substrate</name>
    </ligand>
</feature>
<feature type="binding site" evidence="1">
    <location>
        <begin position="88"/>
        <end position="90"/>
    </location>
    <ligand>
        <name>substrate</name>
    </ligand>
</feature>
<feature type="binding site" evidence="1">
    <location>
        <position position="98"/>
    </location>
    <ligand>
        <name>substrate</name>
    </ligand>
</feature>
<proteinExistence type="inferred from homology"/>
<keyword id="KW-0378">Hydrolase</keyword>
<keyword id="KW-0460">Magnesium</keyword>
<keyword id="KW-0479">Metal-binding</keyword>
<keyword id="KW-0546">Nucleotide metabolism</keyword>